<sequence>MLTERQLLILQTIIDDFIGSAQPVGSRTLAKKDEITYSSATIRNEMADLEELGFIEKTHSSSGRVPSEKGYRFYVDHLLAPQNLPNDEIVQIKDLFVERIFEAEKIAQQSAQILSELTNYTAIVLGPKLSTNKLKNVQIVPLDRQTAVAIIVTDTGHVQSKTITVPESVDLSDLEKMVNILNEKLSGVPMSELHNKIFKEIVTVLRGYVHNYDSAIKMLDGTFQVPLSEKIYFGGKANMLSQPEFHDIHKVRSLLTMIDNEAEFYDILRHKQVGIQVKIGRENSATAMEDCSLISATYSIGEEQLGTIAILGPTRMQYSRVISLLQLFTRQFTDGLKK</sequence>
<reference key="1">
    <citation type="submission" date="2008-10" db="EMBL/GenBank/DDBJ databases">
        <title>Genome sequence of Bacillus anthracis str. CDC 684.</title>
        <authorList>
            <person name="Dodson R.J."/>
            <person name="Munk A.C."/>
            <person name="Brettin T."/>
            <person name="Bruce D."/>
            <person name="Detter C."/>
            <person name="Tapia R."/>
            <person name="Han C."/>
            <person name="Sutton G."/>
            <person name="Sims D."/>
        </authorList>
    </citation>
    <scope>NUCLEOTIDE SEQUENCE [LARGE SCALE GENOMIC DNA]</scope>
    <source>
        <strain>CDC 684 / NRRL 3495</strain>
    </source>
</reference>
<dbReference type="EMBL" id="CP001215">
    <property type="protein sequence ID" value="ACP14778.1"/>
    <property type="molecule type" value="Genomic_DNA"/>
</dbReference>
<dbReference type="RefSeq" id="WP_000954959.1">
    <property type="nucleotide sequence ID" value="NC_012581.1"/>
</dbReference>
<dbReference type="SMR" id="C3L5R9"/>
<dbReference type="GeneID" id="45024193"/>
<dbReference type="KEGG" id="bah:BAMEG_4578"/>
<dbReference type="HOGENOM" id="CLU_050019_1_0_9"/>
<dbReference type="GO" id="GO:0003677">
    <property type="term" value="F:DNA binding"/>
    <property type="evidence" value="ECO:0007669"/>
    <property type="project" value="InterPro"/>
</dbReference>
<dbReference type="GO" id="GO:0045892">
    <property type="term" value="P:negative regulation of DNA-templated transcription"/>
    <property type="evidence" value="ECO:0007669"/>
    <property type="project" value="UniProtKB-UniRule"/>
</dbReference>
<dbReference type="FunFam" id="1.10.10.10:FF:000049">
    <property type="entry name" value="Heat-inducible transcription repressor HrcA"/>
    <property type="match status" value="1"/>
</dbReference>
<dbReference type="FunFam" id="3.30.390.60:FF:000001">
    <property type="entry name" value="Heat-inducible transcription repressor HrcA"/>
    <property type="match status" value="1"/>
</dbReference>
<dbReference type="Gene3D" id="3.30.450.40">
    <property type="match status" value="1"/>
</dbReference>
<dbReference type="Gene3D" id="3.30.390.60">
    <property type="entry name" value="Heat-inducible transcription repressor hrca homolog, domain 3"/>
    <property type="match status" value="1"/>
</dbReference>
<dbReference type="Gene3D" id="1.10.10.10">
    <property type="entry name" value="Winged helix-like DNA-binding domain superfamily/Winged helix DNA-binding domain"/>
    <property type="match status" value="1"/>
</dbReference>
<dbReference type="HAMAP" id="MF_00081">
    <property type="entry name" value="HrcA"/>
    <property type="match status" value="1"/>
</dbReference>
<dbReference type="InterPro" id="IPR029016">
    <property type="entry name" value="GAF-like_dom_sf"/>
</dbReference>
<dbReference type="InterPro" id="IPR002571">
    <property type="entry name" value="HrcA"/>
</dbReference>
<dbReference type="InterPro" id="IPR021153">
    <property type="entry name" value="HrcA_C"/>
</dbReference>
<dbReference type="InterPro" id="IPR036388">
    <property type="entry name" value="WH-like_DNA-bd_sf"/>
</dbReference>
<dbReference type="InterPro" id="IPR036390">
    <property type="entry name" value="WH_DNA-bd_sf"/>
</dbReference>
<dbReference type="InterPro" id="IPR023120">
    <property type="entry name" value="WHTH_transcript_rep_HrcA_IDD"/>
</dbReference>
<dbReference type="NCBIfam" id="TIGR00331">
    <property type="entry name" value="hrcA"/>
    <property type="match status" value="1"/>
</dbReference>
<dbReference type="PANTHER" id="PTHR34824">
    <property type="entry name" value="HEAT-INDUCIBLE TRANSCRIPTION REPRESSOR HRCA"/>
    <property type="match status" value="1"/>
</dbReference>
<dbReference type="PANTHER" id="PTHR34824:SF1">
    <property type="entry name" value="HEAT-INDUCIBLE TRANSCRIPTION REPRESSOR HRCA"/>
    <property type="match status" value="1"/>
</dbReference>
<dbReference type="Pfam" id="PF01628">
    <property type="entry name" value="HrcA"/>
    <property type="match status" value="1"/>
</dbReference>
<dbReference type="PIRSF" id="PIRSF005485">
    <property type="entry name" value="HrcA"/>
    <property type="match status" value="1"/>
</dbReference>
<dbReference type="SUPFAM" id="SSF55781">
    <property type="entry name" value="GAF domain-like"/>
    <property type="match status" value="1"/>
</dbReference>
<dbReference type="SUPFAM" id="SSF46785">
    <property type="entry name" value="Winged helix' DNA-binding domain"/>
    <property type="match status" value="1"/>
</dbReference>
<gene>
    <name evidence="1" type="primary">hrcA</name>
    <name type="ordered locus">BAMEG_4578</name>
</gene>
<keyword id="KW-0678">Repressor</keyword>
<keyword id="KW-0346">Stress response</keyword>
<keyword id="KW-0804">Transcription</keyword>
<keyword id="KW-0805">Transcription regulation</keyword>
<proteinExistence type="inferred from homology"/>
<evidence type="ECO:0000255" key="1">
    <source>
        <dbReference type="HAMAP-Rule" id="MF_00081"/>
    </source>
</evidence>
<protein>
    <recommendedName>
        <fullName evidence="1">Heat-inducible transcription repressor HrcA</fullName>
    </recommendedName>
</protein>
<name>HRCA_BACAC</name>
<comment type="function">
    <text evidence="1">Negative regulator of class I heat shock genes (grpE-dnaK-dnaJ and groELS operons). Prevents heat-shock induction of these operons.</text>
</comment>
<comment type="similarity">
    <text evidence="1">Belongs to the HrcA family.</text>
</comment>
<feature type="chain" id="PRO_1000118287" description="Heat-inducible transcription repressor HrcA">
    <location>
        <begin position="1"/>
        <end position="338"/>
    </location>
</feature>
<organism>
    <name type="scientific">Bacillus anthracis (strain CDC 684 / NRRL 3495)</name>
    <dbReference type="NCBI Taxonomy" id="568206"/>
    <lineage>
        <taxon>Bacteria</taxon>
        <taxon>Bacillati</taxon>
        <taxon>Bacillota</taxon>
        <taxon>Bacilli</taxon>
        <taxon>Bacillales</taxon>
        <taxon>Bacillaceae</taxon>
        <taxon>Bacillus</taxon>
        <taxon>Bacillus cereus group</taxon>
    </lineage>
</organism>
<accession>C3L5R9</accession>